<organism>
    <name type="scientific">Homo sapiens</name>
    <name type="common">Human</name>
    <dbReference type="NCBI Taxonomy" id="9606"/>
    <lineage>
        <taxon>Eukaryota</taxon>
        <taxon>Metazoa</taxon>
        <taxon>Chordata</taxon>
        <taxon>Craniata</taxon>
        <taxon>Vertebrata</taxon>
        <taxon>Euteleostomi</taxon>
        <taxon>Mammalia</taxon>
        <taxon>Eutheria</taxon>
        <taxon>Euarchontoglires</taxon>
        <taxon>Primates</taxon>
        <taxon>Haplorrhini</taxon>
        <taxon>Catarrhini</taxon>
        <taxon>Hominidae</taxon>
        <taxon>Homo</taxon>
    </lineage>
</organism>
<sequence length="770" mass="82884">MEKRAAAGLEGAPGARAQLAVVCLVNIFLTGRLSSAVPALAACSGKLEQHTERRGVIYSPAWPLNYPPGTNCSWYIQGDRGDMITISFRNFDVEESHQCSLDWLLLGPAAPPRQEAFRLCGSAIPPAFISARDHVWIFFHSDASSSGQAQGFRLSYIRGKLGQASCQADEFRCDNGKCLPGPWQCNTVDECGDGSDEGNCSAPASEPPGSLCPGGTFPCSGARSTRCLPVERRCDGLQDCGDGSDEAGCPDLACGRRLGSFYGSFASPDLFGAARGPSDLHCTWLVDTQDSRRVLLQLELRLGYDDYVQVYEGLGERGDRLLQTLSYRSNHRPVSLEAAQGRLTVAYHARARSAGHGFNATYQVKGYCLPWEQPCGSSSDSDGGSLGDQGCFSEPQRCDGWWHCASGRDEQGCPACPPDQYPCEGGSGLCYTPADRCNNQKSCPDGADEKNCFSCQPGTFHCGTNLCIFETWRCDGQEDCQDGSDEHGCLAAVPRKVITAALIGSLVCGLLLVIALGCAFKLYSLRTQEYRAFETQMTRLEAEFVRREAPPSYGQLIAQGLIPPVEDFPVYSASQASVLQNLRTAMRRQMRRHASRRGPSRRRLGRLWNRLFHRPRAPRGQIPLLTAARPSQTVLGDGFLQPAPGAAPDPPAPLMDTGSTRAAGDRPPSAPGRAPEVGPSGPPLPSGLRDPECRPVDKDRKVCREPLVDGPAPADAPREPCSAQDPHPQVSTASSTLGPHSPEPLGVCRNPPPPCSPMLEASDDEALLVC</sequence>
<gene>
    <name type="primary">LRP3</name>
</gene>
<feature type="signal peptide" evidence="2">
    <location>
        <begin position="1"/>
        <end position="36"/>
    </location>
</feature>
<feature type="chain" id="PRO_0000017323" description="Low-density lipoprotein receptor-related protein 3">
    <location>
        <begin position="37"/>
        <end position="770"/>
    </location>
</feature>
<feature type="topological domain" description="Extracellular" evidence="2">
    <location>
        <begin position="37"/>
        <end position="496"/>
    </location>
</feature>
<feature type="transmembrane region" description="Helical" evidence="2">
    <location>
        <begin position="497"/>
        <end position="517"/>
    </location>
</feature>
<feature type="topological domain" description="Cytoplasmic" evidence="2">
    <location>
        <begin position="518"/>
        <end position="770"/>
    </location>
</feature>
<feature type="domain" description="CUB 1" evidence="3">
    <location>
        <begin position="43"/>
        <end position="159"/>
    </location>
</feature>
<feature type="domain" description="LDL-receptor class A 1" evidence="4">
    <location>
        <begin position="165"/>
        <end position="201"/>
    </location>
</feature>
<feature type="domain" description="LDL-receptor class A 2" evidence="4">
    <location>
        <begin position="211"/>
        <end position="250"/>
    </location>
</feature>
<feature type="domain" description="CUB 2" evidence="3">
    <location>
        <begin position="254"/>
        <end position="365"/>
    </location>
</feature>
<feature type="domain" description="LDL-receptor class A 3" evidence="4">
    <location>
        <begin position="415"/>
        <end position="453"/>
    </location>
</feature>
<feature type="domain" description="LDL-receptor class A 4" evidence="4">
    <location>
        <begin position="454"/>
        <end position="490"/>
    </location>
</feature>
<feature type="region of interest" description="Disordered" evidence="5">
    <location>
        <begin position="635"/>
        <end position="770"/>
    </location>
</feature>
<feature type="compositionally biased region" description="Basic and acidic residues" evidence="5">
    <location>
        <begin position="689"/>
        <end position="707"/>
    </location>
</feature>
<feature type="compositionally biased region" description="Polar residues" evidence="5">
    <location>
        <begin position="729"/>
        <end position="738"/>
    </location>
</feature>
<feature type="compositionally biased region" description="Acidic residues" evidence="5">
    <location>
        <begin position="761"/>
        <end position="770"/>
    </location>
</feature>
<feature type="glycosylation site" description="N-linked (GlcNAc...) asparagine" evidence="2">
    <location>
        <position position="71"/>
    </location>
</feature>
<feature type="glycosylation site" description="N-linked (GlcNAc...) asparagine" evidence="2">
    <location>
        <position position="199"/>
    </location>
</feature>
<feature type="glycosylation site" description="N-linked (GlcNAc...) asparagine" evidence="2">
    <location>
        <position position="359"/>
    </location>
</feature>
<feature type="disulfide bond" evidence="1">
    <location>
        <begin position="43"/>
        <end position="72"/>
    </location>
</feature>
<feature type="disulfide bond" evidence="1">
    <location>
        <begin position="99"/>
        <end position="120"/>
    </location>
</feature>
<feature type="disulfide bond" evidence="1">
    <location>
        <begin position="166"/>
        <end position="178"/>
    </location>
</feature>
<feature type="disulfide bond" evidence="1">
    <location>
        <begin position="173"/>
        <end position="191"/>
    </location>
</feature>
<feature type="disulfide bond" evidence="1">
    <location>
        <begin position="185"/>
        <end position="200"/>
    </location>
</feature>
<feature type="disulfide bond" evidence="1">
    <location>
        <begin position="212"/>
        <end position="227"/>
    </location>
</feature>
<feature type="disulfide bond" evidence="1">
    <location>
        <begin position="219"/>
        <end position="240"/>
    </location>
</feature>
<feature type="disulfide bond" evidence="1">
    <location>
        <begin position="234"/>
        <end position="249"/>
    </location>
</feature>
<feature type="disulfide bond" evidence="1">
    <location>
        <begin position="254"/>
        <end position="282"/>
    </location>
</feature>
<feature type="disulfide bond" evidence="1">
    <location>
        <begin position="416"/>
        <end position="430"/>
    </location>
</feature>
<feature type="disulfide bond" evidence="1">
    <location>
        <begin position="423"/>
        <end position="443"/>
    </location>
</feature>
<feature type="disulfide bond" evidence="1">
    <location>
        <begin position="437"/>
        <end position="452"/>
    </location>
</feature>
<feature type="disulfide bond" evidence="1">
    <location>
        <begin position="455"/>
        <end position="467"/>
    </location>
</feature>
<feature type="disulfide bond" evidence="1">
    <location>
        <begin position="462"/>
        <end position="480"/>
    </location>
</feature>
<feature type="disulfide bond" evidence="1">
    <location>
        <begin position="474"/>
        <end position="489"/>
    </location>
</feature>
<feature type="sequence variant" id="VAR_049764" description="In dbSNP:rs3745978.">
    <original>P</original>
    <variation>L</variation>
    <location>
        <position position="213"/>
    </location>
</feature>
<feature type="sequence variant" id="VAR_018171" description="In dbSNP:rs3745974." evidence="6 7 8 9">
    <original>V</original>
    <variation>A</variation>
    <location>
        <position position="708"/>
    </location>
</feature>
<feature type="sequence conflict" description="In Ref. 4; BAG51998." evidence="10" ref="4">
    <original>T</original>
    <variation>I</variation>
    <location>
        <position position="85"/>
    </location>
</feature>
<feature type="sequence conflict" description="In Ref. 4; BAG51998." evidence="10" ref="4">
    <original>G</original>
    <variation>D</variation>
    <location>
        <position position="458"/>
    </location>
</feature>
<reference key="1">
    <citation type="journal article" date="1998" name="Genomics">
        <title>cDNA cloning of a new low-density lipoprotein receptor-related protein and mapping of its gene (LRP3) to chromosome bands 19q12-q13. 2.</title>
        <authorList>
            <person name="Ishii H."/>
            <person name="Kim D.-H."/>
            <person name="Fujita T."/>
            <person name="Endo Y."/>
            <person name="Saeki S."/>
            <person name="Yamamoto T.T."/>
        </authorList>
    </citation>
    <scope>NUCLEOTIDE SEQUENCE [MRNA]</scope>
    <scope>TISSUE SPECIFICITY</scope>
    <scope>VARIANT ALA-708</scope>
</reference>
<reference key="2">
    <citation type="journal article" date="2004" name="Genome Res.">
        <title>The status, quality, and expansion of the NIH full-length cDNA project: the Mammalian Gene Collection (MGC).</title>
        <authorList>
            <consortium name="The MGC Project Team"/>
        </authorList>
    </citation>
    <scope>NUCLEOTIDE SEQUENCE [LARGE SCALE MRNA]</scope>
    <scope>VARIANT ALA-708</scope>
    <source>
        <tissue>Muscle</tissue>
    </source>
</reference>
<reference key="3">
    <citation type="journal article" date="2004" name="Nat. Genet.">
        <title>Complete sequencing and characterization of 21,243 full-length human cDNAs.</title>
        <authorList>
            <person name="Ota T."/>
            <person name="Suzuki Y."/>
            <person name="Nishikawa T."/>
            <person name="Otsuki T."/>
            <person name="Sugiyama T."/>
            <person name="Irie R."/>
            <person name="Wakamatsu A."/>
            <person name="Hayashi K."/>
            <person name="Sato H."/>
            <person name="Nagai K."/>
            <person name="Kimura K."/>
            <person name="Makita H."/>
            <person name="Sekine M."/>
            <person name="Obayashi M."/>
            <person name="Nishi T."/>
            <person name="Shibahara T."/>
            <person name="Tanaka T."/>
            <person name="Ishii S."/>
            <person name="Yamamoto J."/>
            <person name="Saito K."/>
            <person name="Kawai Y."/>
            <person name="Isono Y."/>
            <person name="Nakamura Y."/>
            <person name="Nagahari K."/>
            <person name="Murakami K."/>
            <person name="Yasuda T."/>
            <person name="Iwayanagi T."/>
            <person name="Wagatsuma M."/>
            <person name="Shiratori A."/>
            <person name="Sudo H."/>
            <person name="Hosoiri T."/>
            <person name="Kaku Y."/>
            <person name="Kodaira H."/>
            <person name="Kondo H."/>
            <person name="Sugawara M."/>
            <person name="Takahashi M."/>
            <person name="Kanda K."/>
            <person name="Yokoi T."/>
            <person name="Furuya T."/>
            <person name="Kikkawa E."/>
            <person name="Omura Y."/>
            <person name="Abe K."/>
            <person name="Kamihara K."/>
            <person name="Katsuta N."/>
            <person name="Sato K."/>
            <person name="Tanikawa M."/>
            <person name="Yamazaki M."/>
            <person name="Ninomiya K."/>
            <person name="Ishibashi T."/>
            <person name="Yamashita H."/>
            <person name="Murakawa K."/>
            <person name="Fujimori K."/>
            <person name="Tanai H."/>
            <person name="Kimata M."/>
            <person name="Watanabe M."/>
            <person name="Hiraoka S."/>
            <person name="Chiba Y."/>
            <person name="Ishida S."/>
            <person name="Ono Y."/>
            <person name="Takiguchi S."/>
            <person name="Watanabe S."/>
            <person name="Yosida M."/>
            <person name="Hotuta T."/>
            <person name="Kusano J."/>
            <person name="Kanehori K."/>
            <person name="Takahashi-Fujii A."/>
            <person name="Hara H."/>
            <person name="Tanase T.-O."/>
            <person name="Nomura Y."/>
            <person name="Togiya S."/>
            <person name="Komai F."/>
            <person name="Hara R."/>
            <person name="Takeuchi K."/>
            <person name="Arita M."/>
            <person name="Imose N."/>
            <person name="Musashino K."/>
            <person name="Yuuki H."/>
            <person name="Oshima A."/>
            <person name="Sasaki N."/>
            <person name="Aotsuka S."/>
            <person name="Yoshikawa Y."/>
            <person name="Matsunawa H."/>
            <person name="Ichihara T."/>
            <person name="Shiohata N."/>
            <person name="Sano S."/>
            <person name="Moriya S."/>
            <person name="Momiyama H."/>
            <person name="Satoh N."/>
            <person name="Takami S."/>
            <person name="Terashima Y."/>
            <person name="Suzuki O."/>
            <person name="Nakagawa S."/>
            <person name="Senoh A."/>
            <person name="Mizoguchi H."/>
            <person name="Goto Y."/>
            <person name="Shimizu F."/>
            <person name="Wakebe H."/>
            <person name="Hishigaki H."/>
            <person name="Watanabe T."/>
            <person name="Sugiyama A."/>
            <person name="Takemoto M."/>
            <person name="Kawakami B."/>
            <person name="Yamazaki M."/>
            <person name="Watanabe K."/>
            <person name="Kumagai A."/>
            <person name="Itakura S."/>
            <person name="Fukuzumi Y."/>
            <person name="Fujimori Y."/>
            <person name="Komiyama M."/>
            <person name="Tashiro H."/>
            <person name="Tanigami A."/>
            <person name="Fujiwara T."/>
            <person name="Ono T."/>
            <person name="Yamada K."/>
            <person name="Fujii Y."/>
            <person name="Ozaki K."/>
            <person name="Hirao M."/>
            <person name="Ohmori Y."/>
            <person name="Kawabata A."/>
            <person name="Hikiji T."/>
            <person name="Kobatake N."/>
            <person name="Inagaki H."/>
            <person name="Ikema Y."/>
            <person name="Okamoto S."/>
            <person name="Okitani R."/>
            <person name="Kawakami T."/>
            <person name="Noguchi S."/>
            <person name="Itoh T."/>
            <person name="Shigeta K."/>
            <person name="Senba T."/>
            <person name="Matsumura K."/>
            <person name="Nakajima Y."/>
            <person name="Mizuno T."/>
            <person name="Morinaga M."/>
            <person name="Sasaki M."/>
            <person name="Togashi T."/>
            <person name="Oyama M."/>
            <person name="Hata H."/>
            <person name="Watanabe M."/>
            <person name="Komatsu T."/>
            <person name="Mizushima-Sugano J."/>
            <person name="Satoh T."/>
            <person name="Shirai Y."/>
            <person name="Takahashi Y."/>
            <person name="Nakagawa K."/>
            <person name="Okumura K."/>
            <person name="Nagase T."/>
            <person name="Nomura N."/>
            <person name="Kikuchi H."/>
            <person name="Masuho Y."/>
            <person name="Yamashita R."/>
            <person name="Nakai K."/>
            <person name="Yada T."/>
            <person name="Nakamura Y."/>
            <person name="Ohara O."/>
            <person name="Isogai T."/>
            <person name="Sugano S."/>
        </authorList>
    </citation>
    <scope>NUCLEOTIDE SEQUENCE [LARGE SCALE MRNA] OF 10-770</scope>
    <scope>VARIANT ALA-708</scope>
    <source>
        <tissue>Thalamus</tissue>
    </source>
</reference>
<reference key="4">
    <citation type="journal article" date="2005" name="DNA Res.">
        <title>Signal sequence and keyword trap in silico for selection of full-length human cDNAs encoding secretion or membrane proteins from oligo-capped cDNA libraries.</title>
        <authorList>
            <person name="Otsuki T."/>
            <person name="Ota T."/>
            <person name="Nishikawa T."/>
            <person name="Hayashi K."/>
            <person name="Suzuki Y."/>
            <person name="Yamamoto J."/>
            <person name="Wakamatsu A."/>
            <person name="Kimura K."/>
            <person name="Sakamoto K."/>
            <person name="Hatano N."/>
            <person name="Kawai Y."/>
            <person name="Ishii S."/>
            <person name="Saito K."/>
            <person name="Kojima S."/>
            <person name="Sugiyama T."/>
            <person name="Ono T."/>
            <person name="Okano K."/>
            <person name="Yoshikawa Y."/>
            <person name="Aotsuka S."/>
            <person name="Sasaki N."/>
            <person name="Hattori A."/>
            <person name="Okumura K."/>
            <person name="Nagai K."/>
            <person name="Sugano S."/>
            <person name="Isogai T."/>
        </authorList>
    </citation>
    <scope>NUCLEOTIDE SEQUENCE [LARGE SCALE MRNA] OF 10-770</scope>
    <scope>VARIANT ALA-708</scope>
</reference>
<evidence type="ECO:0000250" key="1"/>
<evidence type="ECO:0000255" key="2"/>
<evidence type="ECO:0000255" key="3">
    <source>
        <dbReference type="PROSITE-ProRule" id="PRU00059"/>
    </source>
</evidence>
<evidence type="ECO:0000255" key="4">
    <source>
        <dbReference type="PROSITE-ProRule" id="PRU00124"/>
    </source>
</evidence>
<evidence type="ECO:0000256" key="5">
    <source>
        <dbReference type="SAM" id="MobiDB-lite"/>
    </source>
</evidence>
<evidence type="ECO:0000269" key="6">
    <source>
    </source>
</evidence>
<evidence type="ECO:0000269" key="7">
    <source>
    </source>
</evidence>
<evidence type="ECO:0000269" key="8">
    <source>
    </source>
</evidence>
<evidence type="ECO:0000269" key="9">
    <source>
    </source>
</evidence>
<evidence type="ECO:0000305" key="10"/>
<name>LRP3_HUMAN</name>
<accession>O75074</accession>
<accession>B3KQD6</accession>
<accession>B4DKF2</accession>
<protein>
    <recommendedName>
        <fullName>Low-density lipoprotein receptor-related protein 3</fullName>
        <shortName>LRP-3</shortName>
    </recommendedName>
    <alternativeName>
        <fullName>105 kDa low-density lipoprotein receptor-related protein</fullName>
        <shortName>hLRp105</shortName>
    </alternativeName>
</protein>
<dbReference type="EMBL" id="AB009462">
    <property type="protein sequence ID" value="BAA32330.1"/>
    <property type="molecule type" value="mRNA"/>
</dbReference>
<dbReference type="EMBL" id="BC007408">
    <property type="protein sequence ID" value="AAH07408.1"/>
    <property type="molecule type" value="mRNA"/>
</dbReference>
<dbReference type="EMBL" id="AK074751">
    <property type="protein sequence ID" value="BAG51998.1"/>
    <property type="status" value="ALT_INIT"/>
    <property type="molecule type" value="mRNA"/>
</dbReference>
<dbReference type="EMBL" id="AK296536">
    <property type="protein sequence ID" value="BAG59164.1"/>
    <property type="status" value="ALT_INIT"/>
    <property type="molecule type" value="mRNA"/>
</dbReference>
<dbReference type="CCDS" id="CCDS12430.1"/>
<dbReference type="PIR" id="T00204">
    <property type="entry name" value="T00204"/>
</dbReference>
<dbReference type="RefSeq" id="NP_002324.2">
    <property type="nucleotide sequence ID" value="NM_002333.4"/>
</dbReference>
<dbReference type="SMR" id="O75074"/>
<dbReference type="BioGRID" id="110217">
    <property type="interactions" value="49"/>
</dbReference>
<dbReference type="ELM" id="O75074"/>
<dbReference type="FunCoup" id="O75074">
    <property type="interactions" value="512"/>
</dbReference>
<dbReference type="IntAct" id="O75074">
    <property type="interactions" value="45"/>
</dbReference>
<dbReference type="MINT" id="O75074"/>
<dbReference type="STRING" id="9606.ENSP00000253193"/>
<dbReference type="GlyCosmos" id="O75074">
    <property type="glycosylation" value="3 sites, No reported glycans"/>
</dbReference>
<dbReference type="GlyGen" id="O75074">
    <property type="glycosylation" value="3 sites, 1 N-linked glycan (1 site)"/>
</dbReference>
<dbReference type="iPTMnet" id="O75074"/>
<dbReference type="PhosphoSitePlus" id="O75074"/>
<dbReference type="BioMuta" id="LRP3"/>
<dbReference type="jPOST" id="O75074"/>
<dbReference type="MassIVE" id="O75074"/>
<dbReference type="PaxDb" id="9606-ENSP00000253193"/>
<dbReference type="PeptideAtlas" id="O75074"/>
<dbReference type="ProteomicsDB" id="49739"/>
<dbReference type="Antibodypedia" id="29007">
    <property type="antibodies" value="161 antibodies from 29 providers"/>
</dbReference>
<dbReference type="DNASU" id="4037"/>
<dbReference type="Ensembl" id="ENST00000253193.9">
    <property type="protein sequence ID" value="ENSP00000253193.6"/>
    <property type="gene ID" value="ENSG00000130881.14"/>
</dbReference>
<dbReference type="GeneID" id="4037"/>
<dbReference type="KEGG" id="hsa:4037"/>
<dbReference type="MANE-Select" id="ENST00000253193.9">
    <property type="protein sequence ID" value="ENSP00000253193.6"/>
    <property type="RefSeq nucleotide sequence ID" value="NM_002333.4"/>
    <property type="RefSeq protein sequence ID" value="NP_002324.2"/>
</dbReference>
<dbReference type="UCSC" id="uc010edh.4">
    <property type="organism name" value="human"/>
</dbReference>
<dbReference type="AGR" id="HGNC:6695"/>
<dbReference type="CTD" id="4037"/>
<dbReference type="GeneCards" id="LRP3"/>
<dbReference type="HGNC" id="HGNC:6695">
    <property type="gene designation" value="LRP3"/>
</dbReference>
<dbReference type="HPA" id="ENSG00000130881">
    <property type="expression patterns" value="Tissue enhanced (brain)"/>
</dbReference>
<dbReference type="MIM" id="603159">
    <property type="type" value="gene"/>
</dbReference>
<dbReference type="neXtProt" id="NX_O75074"/>
<dbReference type="OpenTargets" id="ENSG00000130881"/>
<dbReference type="PharmGKB" id="PA30453"/>
<dbReference type="VEuPathDB" id="HostDB:ENSG00000130881"/>
<dbReference type="eggNOG" id="KOG1215">
    <property type="taxonomic scope" value="Eukaryota"/>
</dbReference>
<dbReference type="GeneTree" id="ENSGT00940000160021"/>
<dbReference type="HOGENOM" id="CLU_013747_1_0_1"/>
<dbReference type="InParanoid" id="O75074"/>
<dbReference type="OMA" id="PTVNIFL"/>
<dbReference type="OrthoDB" id="10020456at2759"/>
<dbReference type="PAN-GO" id="O75074">
    <property type="GO annotations" value="1 GO annotation based on evolutionary models"/>
</dbReference>
<dbReference type="PhylomeDB" id="O75074"/>
<dbReference type="TreeFam" id="TF332149"/>
<dbReference type="PathwayCommons" id="O75074"/>
<dbReference type="SignaLink" id="O75074"/>
<dbReference type="BioGRID-ORCS" id="4037">
    <property type="hits" value="24 hits in 1149 CRISPR screens"/>
</dbReference>
<dbReference type="ChiTaRS" id="LRP3">
    <property type="organism name" value="human"/>
</dbReference>
<dbReference type="GeneWiki" id="LRP3"/>
<dbReference type="GenomeRNAi" id="4037"/>
<dbReference type="Pharos" id="O75074">
    <property type="development level" value="Tbio"/>
</dbReference>
<dbReference type="PRO" id="PR:O75074"/>
<dbReference type="Proteomes" id="UP000005640">
    <property type="component" value="Chromosome 19"/>
</dbReference>
<dbReference type="RNAct" id="O75074">
    <property type="molecule type" value="protein"/>
</dbReference>
<dbReference type="Bgee" id="ENSG00000130881">
    <property type="expression patterns" value="Expressed in putamen and 103 other cell types or tissues"/>
</dbReference>
<dbReference type="ExpressionAtlas" id="O75074">
    <property type="expression patterns" value="baseline and differential"/>
</dbReference>
<dbReference type="GO" id="GO:0005905">
    <property type="term" value="C:clathrin-coated pit"/>
    <property type="evidence" value="ECO:0007669"/>
    <property type="project" value="UniProtKB-KW"/>
</dbReference>
<dbReference type="GO" id="GO:0016020">
    <property type="term" value="C:membrane"/>
    <property type="evidence" value="ECO:0000304"/>
    <property type="project" value="ProtInc"/>
</dbReference>
<dbReference type="GO" id="GO:0005886">
    <property type="term" value="C:plasma membrane"/>
    <property type="evidence" value="ECO:0000318"/>
    <property type="project" value="GO_Central"/>
</dbReference>
<dbReference type="GO" id="GO:0045599">
    <property type="term" value="P:negative regulation of fat cell differentiation"/>
    <property type="evidence" value="ECO:0000315"/>
    <property type="project" value="ARUK-UCL"/>
</dbReference>
<dbReference type="GO" id="GO:0010629">
    <property type="term" value="P:negative regulation of gene expression"/>
    <property type="evidence" value="ECO:0000315"/>
    <property type="project" value="ARUK-UCL"/>
</dbReference>
<dbReference type="GO" id="GO:0010628">
    <property type="term" value="P:positive regulation of gene expression"/>
    <property type="evidence" value="ECO:0000315"/>
    <property type="project" value="ARUK-UCL"/>
</dbReference>
<dbReference type="GO" id="GO:0045669">
    <property type="term" value="P:positive regulation of osteoblast differentiation"/>
    <property type="evidence" value="ECO:0000315"/>
    <property type="project" value="ARUK-UCL"/>
</dbReference>
<dbReference type="GO" id="GO:0006898">
    <property type="term" value="P:receptor-mediated endocytosis"/>
    <property type="evidence" value="ECO:0000304"/>
    <property type="project" value="ProtInc"/>
</dbReference>
<dbReference type="GO" id="GO:0150104">
    <property type="term" value="P:transport across blood-brain barrier"/>
    <property type="evidence" value="ECO:0000303"/>
    <property type="project" value="ARUK-UCL"/>
</dbReference>
<dbReference type="CDD" id="cd00041">
    <property type="entry name" value="CUB"/>
    <property type="match status" value="2"/>
</dbReference>
<dbReference type="CDD" id="cd00112">
    <property type="entry name" value="LDLa"/>
    <property type="match status" value="4"/>
</dbReference>
<dbReference type="FunFam" id="4.10.400.10:FF:000055">
    <property type="entry name" value="Low-density lipoprotein receptor-related protein 10"/>
    <property type="match status" value="1"/>
</dbReference>
<dbReference type="FunFam" id="4.10.400.10:FF:000050">
    <property type="entry name" value="low-density lipoprotein receptor-related protein 10"/>
    <property type="match status" value="1"/>
</dbReference>
<dbReference type="FunFam" id="2.60.120.290:FF:000021">
    <property type="entry name" value="Low-density lipoprotein receptor-related protein 12"/>
    <property type="match status" value="1"/>
</dbReference>
<dbReference type="FunFam" id="4.10.400.10:FF:000034">
    <property type="entry name" value="Low-density lipoprotein receptor-related protein 2"/>
    <property type="match status" value="1"/>
</dbReference>
<dbReference type="FunFam" id="2.60.120.290:FF:000031">
    <property type="entry name" value="Low-density lipoprotein receptor-related protein 3"/>
    <property type="match status" value="1"/>
</dbReference>
<dbReference type="FunFam" id="4.10.400.10:FF:000089">
    <property type="entry name" value="Low-density lipoprotein receptor-related protein 3"/>
    <property type="match status" value="1"/>
</dbReference>
<dbReference type="Gene3D" id="4.10.400.10">
    <property type="entry name" value="Low-density Lipoprotein Receptor"/>
    <property type="match status" value="4"/>
</dbReference>
<dbReference type="Gene3D" id="2.60.120.290">
    <property type="entry name" value="Spermadhesin, CUB domain"/>
    <property type="match status" value="2"/>
</dbReference>
<dbReference type="InterPro" id="IPR000859">
    <property type="entry name" value="CUB_dom"/>
</dbReference>
<dbReference type="InterPro" id="IPR036055">
    <property type="entry name" value="LDL_receptor-like_sf"/>
</dbReference>
<dbReference type="InterPro" id="IPR050685">
    <property type="entry name" value="LDLR"/>
</dbReference>
<dbReference type="InterPro" id="IPR023415">
    <property type="entry name" value="LDLR_class-A_CS"/>
</dbReference>
<dbReference type="InterPro" id="IPR002172">
    <property type="entry name" value="LDrepeatLR_classA_rpt"/>
</dbReference>
<dbReference type="InterPro" id="IPR035914">
    <property type="entry name" value="Sperma_CUB_dom_sf"/>
</dbReference>
<dbReference type="PANTHER" id="PTHR24270">
    <property type="entry name" value="LOW-DENSITY LIPOPROTEIN RECEPTOR-RELATED"/>
    <property type="match status" value="1"/>
</dbReference>
<dbReference type="Pfam" id="PF00431">
    <property type="entry name" value="CUB"/>
    <property type="match status" value="2"/>
</dbReference>
<dbReference type="Pfam" id="PF00057">
    <property type="entry name" value="Ldl_recept_a"/>
    <property type="match status" value="3"/>
</dbReference>
<dbReference type="PRINTS" id="PR00261">
    <property type="entry name" value="LDLRECEPTOR"/>
</dbReference>
<dbReference type="SMART" id="SM00042">
    <property type="entry name" value="CUB"/>
    <property type="match status" value="2"/>
</dbReference>
<dbReference type="SMART" id="SM00192">
    <property type="entry name" value="LDLa"/>
    <property type="match status" value="5"/>
</dbReference>
<dbReference type="SUPFAM" id="SSF57424">
    <property type="entry name" value="LDL receptor-like module"/>
    <property type="match status" value="4"/>
</dbReference>
<dbReference type="SUPFAM" id="SSF49854">
    <property type="entry name" value="Spermadhesin, CUB domain"/>
    <property type="match status" value="2"/>
</dbReference>
<dbReference type="PROSITE" id="PS01180">
    <property type="entry name" value="CUB"/>
    <property type="match status" value="2"/>
</dbReference>
<dbReference type="PROSITE" id="PS01209">
    <property type="entry name" value="LDLRA_1"/>
    <property type="match status" value="3"/>
</dbReference>
<dbReference type="PROSITE" id="PS50068">
    <property type="entry name" value="LDLRA_2"/>
    <property type="match status" value="4"/>
</dbReference>
<proteinExistence type="evidence at protein level"/>
<comment type="function">
    <text>Probable receptor, which may be involved in the internalization of lipophilic molecules and/or signal transduction. Its precise role is however unclear, since it does not bind to very low density lipoprotein (VLDL) or to LRPAP1 in vitro.</text>
</comment>
<comment type="subunit">
    <text evidence="1">Binds GGA1 and GGA2.</text>
</comment>
<comment type="subcellular location">
    <subcellularLocation>
        <location evidence="10">Membrane</location>
        <topology evidence="10">Single-pass type I membrane protein</topology>
    </subcellularLocation>
    <subcellularLocation>
        <location evidence="1">Membrane</location>
        <location evidence="1">Coated pit</location>
    </subcellularLocation>
</comment>
<comment type="tissue specificity">
    <text evidence="9">Widely expressed. Highly expressed in skeletal muscle and ovary. Expressed at intermediate level in heart, brain, liver, pancreas, prostate and small intestine. Weakly expressed in testis, colon and leukocyte.</text>
</comment>
<comment type="similarity">
    <text evidence="10">Belongs to the LDLR family.</text>
</comment>
<comment type="sequence caution" evidence="10">
    <conflict type="erroneous initiation">
        <sequence resource="EMBL-CDS" id="BAG51998"/>
    </conflict>
</comment>
<comment type="sequence caution" evidence="10">
    <conflict type="erroneous initiation">
        <sequence resource="EMBL-CDS" id="BAG59164"/>
    </conflict>
</comment>
<keyword id="KW-0168">Coated pit</keyword>
<keyword id="KW-1015">Disulfide bond</keyword>
<keyword id="KW-0254">Endocytosis</keyword>
<keyword id="KW-0325">Glycoprotein</keyword>
<keyword id="KW-0472">Membrane</keyword>
<keyword id="KW-1267">Proteomics identification</keyword>
<keyword id="KW-0675">Receptor</keyword>
<keyword id="KW-1185">Reference proteome</keyword>
<keyword id="KW-0677">Repeat</keyword>
<keyword id="KW-0732">Signal</keyword>
<keyword id="KW-0812">Transmembrane</keyword>
<keyword id="KW-1133">Transmembrane helix</keyword>